<comment type="function">
    <text evidence="1">Specifically dimethylates two adjacent adenosines (A1518 and A1519) in the loop of a conserved hairpin near the 3'-end of 16S rRNA in the 30S particle. May play a critical role in biogenesis of 30S subunits.</text>
</comment>
<comment type="catalytic activity">
    <reaction evidence="1">
        <text>adenosine(1518)/adenosine(1519) in 16S rRNA + 4 S-adenosyl-L-methionine = N(6)-dimethyladenosine(1518)/N(6)-dimethyladenosine(1519) in 16S rRNA + 4 S-adenosyl-L-homocysteine + 4 H(+)</text>
        <dbReference type="Rhea" id="RHEA:19609"/>
        <dbReference type="Rhea" id="RHEA-COMP:10232"/>
        <dbReference type="Rhea" id="RHEA-COMP:10233"/>
        <dbReference type="ChEBI" id="CHEBI:15378"/>
        <dbReference type="ChEBI" id="CHEBI:57856"/>
        <dbReference type="ChEBI" id="CHEBI:59789"/>
        <dbReference type="ChEBI" id="CHEBI:74411"/>
        <dbReference type="ChEBI" id="CHEBI:74493"/>
        <dbReference type="EC" id="2.1.1.182"/>
    </reaction>
</comment>
<comment type="subcellular location">
    <subcellularLocation>
        <location evidence="1">Cytoplasm</location>
    </subcellularLocation>
</comment>
<comment type="similarity">
    <text evidence="1">Belongs to the class I-like SAM-binding methyltransferase superfamily. rRNA adenine N(6)-methyltransferase family. RsmA subfamily.</text>
</comment>
<feature type="chain" id="PRO_0000257333" description="Ribosomal RNA small subunit methyltransferase A">
    <location>
        <begin position="1"/>
        <end position="287"/>
    </location>
</feature>
<feature type="binding site" evidence="1">
    <location>
        <position position="28"/>
    </location>
    <ligand>
        <name>S-adenosyl-L-methionine</name>
        <dbReference type="ChEBI" id="CHEBI:59789"/>
    </ligand>
</feature>
<feature type="binding site" evidence="1">
    <location>
        <position position="30"/>
    </location>
    <ligand>
        <name>S-adenosyl-L-methionine</name>
        <dbReference type="ChEBI" id="CHEBI:59789"/>
    </ligand>
</feature>
<feature type="binding site" evidence="1">
    <location>
        <position position="55"/>
    </location>
    <ligand>
        <name>S-adenosyl-L-methionine</name>
        <dbReference type="ChEBI" id="CHEBI:59789"/>
    </ligand>
</feature>
<feature type="binding site" evidence="1">
    <location>
        <position position="77"/>
    </location>
    <ligand>
        <name>S-adenosyl-L-methionine</name>
        <dbReference type="ChEBI" id="CHEBI:59789"/>
    </ligand>
</feature>
<feature type="binding site" evidence="1">
    <location>
        <position position="103"/>
    </location>
    <ligand>
        <name>S-adenosyl-L-methionine</name>
        <dbReference type="ChEBI" id="CHEBI:59789"/>
    </ligand>
</feature>
<feature type="binding site" evidence="1">
    <location>
        <position position="123"/>
    </location>
    <ligand>
        <name>S-adenosyl-L-methionine</name>
        <dbReference type="ChEBI" id="CHEBI:59789"/>
    </ligand>
</feature>
<sequence length="287" mass="31086">MSAIDGLPPLRDVIKRHDLAARKSLGQNFLLDLNLTARIARAAGPLDDVTVVEIGPGPGGLTRALLATGARRVIAIERDERALGALEEIAAHYPGRLEIVCADAMEFDPRPLLGGARARIVANLPYNIATPLLIGWLCAEPWPPWYDMMVLMFQREVAQRIVACEDDDAYGRLAVLSNWRCDTGMLFDIAPSAFVPQPKVTSSVVRLVPRSAPEPCNRAALEQVAAAAFGQRRKMLRQSLKALGVDPARLAAAAGIDPTRRAETVPVSGFVAMANELIDIRDTKNTP</sequence>
<accession>Q2IX80</accession>
<organism>
    <name type="scientific">Rhodopseudomonas palustris (strain HaA2)</name>
    <dbReference type="NCBI Taxonomy" id="316058"/>
    <lineage>
        <taxon>Bacteria</taxon>
        <taxon>Pseudomonadati</taxon>
        <taxon>Pseudomonadota</taxon>
        <taxon>Alphaproteobacteria</taxon>
        <taxon>Hyphomicrobiales</taxon>
        <taxon>Nitrobacteraceae</taxon>
        <taxon>Rhodopseudomonas</taxon>
    </lineage>
</organism>
<keyword id="KW-0963">Cytoplasm</keyword>
<keyword id="KW-0489">Methyltransferase</keyword>
<keyword id="KW-1185">Reference proteome</keyword>
<keyword id="KW-0694">RNA-binding</keyword>
<keyword id="KW-0698">rRNA processing</keyword>
<keyword id="KW-0949">S-adenosyl-L-methionine</keyword>
<keyword id="KW-0808">Transferase</keyword>
<gene>
    <name evidence="1" type="primary">rsmA</name>
    <name evidence="1" type="synonym">ksgA</name>
    <name type="ordered locus">RPB_2475</name>
</gene>
<protein>
    <recommendedName>
        <fullName evidence="1">Ribosomal RNA small subunit methyltransferase A</fullName>
        <ecNumber evidence="1">2.1.1.182</ecNumber>
    </recommendedName>
    <alternativeName>
        <fullName evidence="1">16S rRNA (adenine(1518)-N(6)/adenine(1519)-N(6))-dimethyltransferase</fullName>
    </alternativeName>
    <alternativeName>
        <fullName evidence="1">16S rRNA dimethyladenosine transferase</fullName>
    </alternativeName>
    <alternativeName>
        <fullName evidence="1">16S rRNA dimethylase</fullName>
    </alternativeName>
    <alternativeName>
        <fullName evidence="1">S-adenosylmethionine-6-N', N'-adenosyl(rRNA) dimethyltransferase</fullName>
    </alternativeName>
</protein>
<dbReference type="EC" id="2.1.1.182" evidence="1"/>
<dbReference type="EMBL" id="CP000250">
    <property type="protein sequence ID" value="ABD07180.1"/>
    <property type="molecule type" value="Genomic_DNA"/>
</dbReference>
<dbReference type="RefSeq" id="WP_011441365.1">
    <property type="nucleotide sequence ID" value="NC_007778.1"/>
</dbReference>
<dbReference type="SMR" id="Q2IX80"/>
<dbReference type="STRING" id="316058.RPB_2475"/>
<dbReference type="KEGG" id="rpb:RPB_2475"/>
<dbReference type="eggNOG" id="COG0030">
    <property type="taxonomic scope" value="Bacteria"/>
</dbReference>
<dbReference type="HOGENOM" id="CLU_041220_0_1_5"/>
<dbReference type="OrthoDB" id="9814755at2"/>
<dbReference type="Proteomes" id="UP000008809">
    <property type="component" value="Chromosome"/>
</dbReference>
<dbReference type="GO" id="GO:0005829">
    <property type="term" value="C:cytosol"/>
    <property type="evidence" value="ECO:0007669"/>
    <property type="project" value="TreeGrafter"/>
</dbReference>
<dbReference type="GO" id="GO:0052908">
    <property type="term" value="F:16S rRNA (adenine(1518)-N(6)/adenine(1519)-N(6))-dimethyltransferase activity"/>
    <property type="evidence" value="ECO:0007669"/>
    <property type="project" value="UniProtKB-EC"/>
</dbReference>
<dbReference type="GO" id="GO:0003723">
    <property type="term" value="F:RNA binding"/>
    <property type="evidence" value="ECO:0007669"/>
    <property type="project" value="UniProtKB-KW"/>
</dbReference>
<dbReference type="CDD" id="cd02440">
    <property type="entry name" value="AdoMet_MTases"/>
    <property type="match status" value="1"/>
</dbReference>
<dbReference type="Gene3D" id="1.10.8.100">
    <property type="entry name" value="Ribosomal RNA adenine dimethylase-like, domain 2"/>
    <property type="match status" value="1"/>
</dbReference>
<dbReference type="Gene3D" id="3.40.50.150">
    <property type="entry name" value="Vaccinia Virus protein VP39"/>
    <property type="match status" value="1"/>
</dbReference>
<dbReference type="HAMAP" id="MF_00607">
    <property type="entry name" value="16SrRNA_methyltr_A"/>
    <property type="match status" value="1"/>
</dbReference>
<dbReference type="InterPro" id="IPR001737">
    <property type="entry name" value="KsgA/Erm"/>
</dbReference>
<dbReference type="InterPro" id="IPR023165">
    <property type="entry name" value="rRNA_Ade_diMease-like_C"/>
</dbReference>
<dbReference type="InterPro" id="IPR020596">
    <property type="entry name" value="rRNA_Ade_Mease_Trfase_CS"/>
</dbReference>
<dbReference type="InterPro" id="IPR020598">
    <property type="entry name" value="rRNA_Ade_methylase_Trfase_N"/>
</dbReference>
<dbReference type="InterPro" id="IPR011530">
    <property type="entry name" value="rRNA_adenine_dimethylase"/>
</dbReference>
<dbReference type="InterPro" id="IPR029063">
    <property type="entry name" value="SAM-dependent_MTases_sf"/>
</dbReference>
<dbReference type="NCBIfam" id="TIGR00755">
    <property type="entry name" value="ksgA"/>
    <property type="match status" value="1"/>
</dbReference>
<dbReference type="PANTHER" id="PTHR11727">
    <property type="entry name" value="DIMETHYLADENOSINE TRANSFERASE"/>
    <property type="match status" value="1"/>
</dbReference>
<dbReference type="PANTHER" id="PTHR11727:SF7">
    <property type="entry name" value="DIMETHYLADENOSINE TRANSFERASE-RELATED"/>
    <property type="match status" value="1"/>
</dbReference>
<dbReference type="Pfam" id="PF00398">
    <property type="entry name" value="RrnaAD"/>
    <property type="match status" value="1"/>
</dbReference>
<dbReference type="SMART" id="SM00650">
    <property type="entry name" value="rADc"/>
    <property type="match status" value="1"/>
</dbReference>
<dbReference type="SUPFAM" id="SSF53335">
    <property type="entry name" value="S-adenosyl-L-methionine-dependent methyltransferases"/>
    <property type="match status" value="1"/>
</dbReference>
<dbReference type="PROSITE" id="PS01131">
    <property type="entry name" value="RRNA_A_DIMETH"/>
    <property type="match status" value="1"/>
</dbReference>
<dbReference type="PROSITE" id="PS51689">
    <property type="entry name" value="SAM_RNA_A_N6_MT"/>
    <property type="match status" value="1"/>
</dbReference>
<reference key="1">
    <citation type="submission" date="2006-01" db="EMBL/GenBank/DDBJ databases">
        <title>Complete sequence of Rhodopseudomonas palustris HaA2.</title>
        <authorList>
            <consortium name="US DOE Joint Genome Institute"/>
            <person name="Copeland A."/>
            <person name="Lucas S."/>
            <person name="Lapidus A."/>
            <person name="Barry K."/>
            <person name="Detter J.C."/>
            <person name="Glavina T."/>
            <person name="Hammon N."/>
            <person name="Israni S."/>
            <person name="Pitluck S."/>
            <person name="Chain P."/>
            <person name="Malfatti S."/>
            <person name="Shin M."/>
            <person name="Vergez L."/>
            <person name="Schmutz J."/>
            <person name="Larimer F."/>
            <person name="Land M."/>
            <person name="Hauser L."/>
            <person name="Pelletier D.A."/>
            <person name="Kyrpides N."/>
            <person name="Anderson I."/>
            <person name="Oda Y."/>
            <person name="Harwood C.S."/>
            <person name="Richardson P."/>
        </authorList>
    </citation>
    <scope>NUCLEOTIDE SEQUENCE [LARGE SCALE GENOMIC DNA]</scope>
    <source>
        <strain>HaA2</strain>
    </source>
</reference>
<evidence type="ECO:0000255" key="1">
    <source>
        <dbReference type="HAMAP-Rule" id="MF_00607"/>
    </source>
</evidence>
<proteinExistence type="inferred from homology"/>
<name>RSMA_RHOP2</name>